<sequence length="23" mass="2406">QKCCTGKKGSCSGRACKNLRCCA</sequence>
<reference key="1">
    <citation type="journal article" date="2008" name="J. Am. Chem. Soc.">
        <title>NMR-based mapping of disulfide bridges in cysteine-rich peptides: application to the mu-conotoxin SxIIIA.</title>
        <authorList>
            <person name="Walewska A."/>
            <person name="Skalicky J.J."/>
            <person name="Davis D.R."/>
            <person name="Zhang M.-M."/>
            <person name="Lopez-Vera E."/>
            <person name="Watkins M."/>
            <person name="Han T.S."/>
            <person name="Yoshikami D."/>
            <person name="Olivera B.M."/>
            <person name="Bulaj G."/>
        </authorList>
    </citation>
    <scope>NUCLEOTIDE SEQUENCE [MRNA]</scope>
    <scope>PYROGLUTAMATE FORMATION AT GLN-1</scope>
    <scope>AMIDATION AT ALA-23</scope>
    <source>
        <tissue>Venom duct</tissue>
    </source>
</reference>
<evidence type="ECO:0000250" key="1"/>
<evidence type="ECO:0000250" key="2">
    <source>
        <dbReference type="UniProtKB" id="P01523"/>
    </source>
</evidence>
<evidence type="ECO:0000303" key="3">
    <source>
    </source>
</evidence>
<evidence type="ECO:0000305" key="4"/>
<evidence type="ECO:0000305" key="5">
    <source>
    </source>
</evidence>
<keyword id="KW-0027">Amidation</keyword>
<keyword id="KW-1015">Disulfide bond</keyword>
<keyword id="KW-0872">Ion channel impairing toxin</keyword>
<keyword id="KW-0528">Neurotoxin</keyword>
<keyword id="KW-0873">Pyrrolidone carboxylic acid</keyword>
<keyword id="KW-0964">Secreted</keyword>
<keyword id="KW-0800">Toxin</keyword>
<keyword id="KW-0738">Voltage-gated sodium channel impairing toxin</keyword>
<feature type="peptide" id="PRO_0000366073" description="Mu-conotoxin-like SxIIIB" evidence="5">
    <location>
        <begin position="1"/>
        <end position="23"/>
    </location>
</feature>
<feature type="modified residue" description="Pyrrolidone carboxylic acid" evidence="5">
    <location>
        <position position="1"/>
    </location>
</feature>
<feature type="modified residue" description="Alanine amide" evidence="5">
    <location>
        <position position="23"/>
    </location>
</feature>
<feature type="disulfide bond" evidence="2 5">
    <location>
        <begin position="3"/>
        <end position="16"/>
    </location>
</feature>
<feature type="disulfide bond" evidence="2 5">
    <location>
        <begin position="4"/>
        <end position="21"/>
    </location>
</feature>
<feature type="disulfide bond" evidence="2 5">
    <location>
        <begin position="11"/>
        <end position="22"/>
    </location>
</feature>
<accession>P0C8V3</accession>
<organism>
    <name type="scientific">Conus striolatus</name>
    <name type="common">Cone snail</name>
    <dbReference type="NCBI Taxonomy" id="101315"/>
    <lineage>
        <taxon>Eukaryota</taxon>
        <taxon>Metazoa</taxon>
        <taxon>Spiralia</taxon>
        <taxon>Lophotrochozoa</taxon>
        <taxon>Mollusca</taxon>
        <taxon>Gastropoda</taxon>
        <taxon>Caenogastropoda</taxon>
        <taxon>Neogastropoda</taxon>
        <taxon>Conoidea</taxon>
        <taxon>Conidae</taxon>
        <taxon>Conus</taxon>
        <taxon>Pionoconus</taxon>
    </lineage>
</organism>
<name>CM3B_CONSR</name>
<proteinExistence type="evidence at protein level"/>
<protein>
    <recommendedName>
        <fullName evidence="3">Mu-conotoxin-like SxIIIB</fullName>
    </recommendedName>
</protein>
<dbReference type="ConoServer" id="3585">
    <property type="toxin name" value="SxIIIB"/>
</dbReference>
<dbReference type="GO" id="GO:0005576">
    <property type="term" value="C:extracellular region"/>
    <property type="evidence" value="ECO:0007669"/>
    <property type="project" value="UniProtKB-SubCell"/>
</dbReference>
<dbReference type="GO" id="GO:0017080">
    <property type="term" value="F:sodium channel regulator activity"/>
    <property type="evidence" value="ECO:0007669"/>
    <property type="project" value="UniProtKB-KW"/>
</dbReference>
<dbReference type="GO" id="GO:0090729">
    <property type="term" value="F:toxin activity"/>
    <property type="evidence" value="ECO:0007669"/>
    <property type="project" value="UniProtKB-KW"/>
</dbReference>
<comment type="function">
    <text evidence="1">Mu-conotoxins block voltage-gated sodium channels (Nav).</text>
</comment>
<comment type="subcellular location">
    <subcellularLocation>
        <location evidence="5">Secreted</location>
    </subcellularLocation>
</comment>
<comment type="tissue specificity">
    <text evidence="5">Expressed by the venom duct.</text>
</comment>
<comment type="domain">
    <text evidence="4">The cysteine framework is III (CC-C-C-CC). Classified in the M-4 branch, since 4 residues stand between the fourth and the fifth cysteine residues.</text>
</comment>
<comment type="similarity">
    <text evidence="4">Belongs to the conotoxin M superfamily.</text>
</comment>